<feature type="chain" id="PRO_0000403305" description="N-acyl homoserine lactonase AttM">
    <location>
        <begin position="1"/>
        <end position="263"/>
    </location>
</feature>
<feature type="binding site" evidence="1">
    <location>
        <position position="103"/>
    </location>
    <ligand>
        <name>Zn(2+)</name>
        <dbReference type="ChEBI" id="CHEBI:29105"/>
        <label>1</label>
    </ligand>
</feature>
<feature type="binding site" evidence="1">
    <location>
        <position position="105"/>
    </location>
    <ligand>
        <name>Zn(2+)</name>
        <dbReference type="ChEBI" id="CHEBI:29105"/>
        <label>1</label>
    </ligand>
</feature>
<feature type="binding site" evidence="1">
    <location>
        <position position="107"/>
    </location>
    <ligand>
        <name>Zn(2+)</name>
        <dbReference type="ChEBI" id="CHEBI:29105"/>
        <label>2</label>
    </ligand>
</feature>
<feature type="binding site" evidence="1">
    <location>
        <position position="108"/>
    </location>
    <ligand>
        <name>Zn(2+)</name>
        <dbReference type="ChEBI" id="CHEBI:29105"/>
        <label>2</label>
    </ligand>
</feature>
<feature type="binding site" evidence="1">
    <location>
        <position position="180"/>
    </location>
    <ligand>
        <name>Zn(2+)</name>
        <dbReference type="ChEBI" id="CHEBI:29105"/>
        <label>1</label>
    </ligand>
</feature>
<feature type="binding site" evidence="1">
    <location>
        <position position="202"/>
    </location>
    <ligand>
        <name>Zn(2+)</name>
        <dbReference type="ChEBI" id="CHEBI:29105"/>
        <label>1</label>
    </ligand>
</feature>
<feature type="binding site" evidence="1">
    <location>
        <position position="202"/>
    </location>
    <ligand>
        <name>Zn(2+)</name>
        <dbReference type="ChEBI" id="CHEBI:29105"/>
        <label>2</label>
    </ligand>
</feature>
<feature type="binding site" evidence="1">
    <location>
        <position position="247"/>
    </location>
    <ligand>
        <name>Zn(2+)</name>
        <dbReference type="ChEBI" id="CHEBI:29105"/>
        <label>2</label>
    </ligand>
</feature>
<comment type="catalytic activity">
    <reaction evidence="2">
        <text>an N-acyl-L-homoserine lactone + H2O = an N-acyl-L-homoserine + H(+)</text>
        <dbReference type="Rhea" id="RHEA:22576"/>
        <dbReference type="ChEBI" id="CHEBI:15377"/>
        <dbReference type="ChEBI" id="CHEBI:15378"/>
        <dbReference type="ChEBI" id="CHEBI:55474"/>
        <dbReference type="ChEBI" id="CHEBI:58921"/>
        <dbReference type="EC" id="3.1.1.81"/>
    </reaction>
</comment>
<comment type="cofactor">
    <cofactor evidence="1">
        <name>Zn(2+)</name>
        <dbReference type="ChEBI" id="CHEBI:29105"/>
    </cofactor>
    <text evidence="1">Binds 2 Zn(2+) ions per subunit.</text>
</comment>
<comment type="developmental stage">
    <text evidence="2">Expression increases in the stationary phase of growth.</text>
</comment>
<comment type="similarity">
    <text evidence="4">Belongs to the metallo-beta-lactamase superfamily.</text>
</comment>
<sequence>MTDIRLYMLQSGTLKCKVHNIKMNQGNGADYEIPVPFFLITHPGGHTVIDGGNAIEVATDPRGHWGGICDVYWPVLDKDQGCVDQIKALGFDPADVKYVVQSHLHLDHTGAIGRFPNATHIVQRSEYEYAFTPDWFAGGGYIRKDFDKPGLKWQFLNGTQDDYYDVYGDGTLTTIFTPGHAPGHQSLLVRLPNSKPLLLTIDAAYTLDHWEEKALPGFLASTVDTVRSVQKLRTYAEKHDATVVTGHDPDAWANFKKAPEFYA</sequence>
<organism>
    <name type="scientific">Rhizobium radiobacter</name>
    <name type="common">Agrobacterium tumefaciens</name>
    <name type="synonym">Agrobacterium radiobacter</name>
    <dbReference type="NCBI Taxonomy" id="358"/>
    <lineage>
        <taxon>Bacteria</taxon>
        <taxon>Pseudomonadati</taxon>
        <taxon>Pseudomonadota</taxon>
        <taxon>Alphaproteobacteria</taxon>
        <taxon>Hyphomicrobiales</taxon>
        <taxon>Rhizobiaceae</taxon>
        <taxon>Rhizobium/Agrobacterium group</taxon>
        <taxon>Agrobacterium</taxon>
        <taxon>Agrobacterium tumefaciens complex</taxon>
    </lineage>
</organism>
<proteinExistence type="evidence at protein level"/>
<protein>
    <recommendedName>
        <fullName evidence="3">N-acyl homoserine lactonase AttM</fullName>
        <shortName evidence="3">AHL-lactonase AttM</shortName>
        <ecNumber>3.1.1.81</ecNumber>
    </recommendedName>
</protein>
<evidence type="ECO:0000250" key="1">
    <source>
        <dbReference type="UniProtKB" id="Q7B8B9"/>
    </source>
</evidence>
<evidence type="ECO:0000269" key="2">
    <source>
    </source>
</evidence>
<evidence type="ECO:0000303" key="3">
    <source>
    </source>
</evidence>
<evidence type="ECO:0000305" key="4"/>
<evidence type="ECO:0000312" key="5">
    <source>
        <dbReference type="EMBL" id="AAL13075.1"/>
    </source>
</evidence>
<dbReference type="EC" id="3.1.1.81"/>
<dbReference type="EMBL" id="AY052389">
    <property type="protein sequence ID" value="AAL13075.1"/>
    <property type="molecule type" value="Genomic_DNA"/>
</dbReference>
<dbReference type="RefSeq" id="WP_038496768.1">
    <property type="nucleotide sequence ID" value="NZ_JAAQPP010000018.1"/>
</dbReference>
<dbReference type="SMR" id="Q8VPD5"/>
<dbReference type="KEGG" id="atf:Ach5_48250"/>
<dbReference type="PATRIC" id="fig|358.67.peg.5041"/>
<dbReference type="GO" id="GO:0102007">
    <property type="term" value="F:acyl-L-homoserine-lactone lactonohydrolase activity"/>
    <property type="evidence" value="ECO:0007669"/>
    <property type="project" value="UniProtKB-EC"/>
</dbReference>
<dbReference type="GO" id="GO:0046872">
    <property type="term" value="F:metal ion binding"/>
    <property type="evidence" value="ECO:0007669"/>
    <property type="project" value="UniProtKB-KW"/>
</dbReference>
<dbReference type="CDD" id="cd07729">
    <property type="entry name" value="AHL_lactonase_MBL-fold"/>
    <property type="match status" value="1"/>
</dbReference>
<dbReference type="Gene3D" id="3.60.15.10">
    <property type="entry name" value="Ribonuclease Z/Hydroxyacylglutathione hydrolase-like"/>
    <property type="match status" value="1"/>
</dbReference>
<dbReference type="InterPro" id="IPR054889">
    <property type="entry name" value="AHLLactAttM"/>
</dbReference>
<dbReference type="InterPro" id="IPR051013">
    <property type="entry name" value="MBL_superfamily_lactonases"/>
</dbReference>
<dbReference type="InterPro" id="IPR001279">
    <property type="entry name" value="Metallo-B-lactamas"/>
</dbReference>
<dbReference type="InterPro" id="IPR036866">
    <property type="entry name" value="RibonucZ/Hydroxyglut_hydro"/>
</dbReference>
<dbReference type="NCBIfam" id="NF045700">
    <property type="entry name" value="AHLLactAttM"/>
    <property type="match status" value="1"/>
</dbReference>
<dbReference type="PANTHER" id="PTHR42978:SF2">
    <property type="entry name" value="102 KBASES UNSTABLE REGION: FROM 1 TO 119443"/>
    <property type="match status" value="1"/>
</dbReference>
<dbReference type="PANTHER" id="PTHR42978">
    <property type="entry name" value="QUORUM-QUENCHING LACTONASE YTNP-RELATED-RELATED"/>
    <property type="match status" value="1"/>
</dbReference>
<dbReference type="Pfam" id="PF00753">
    <property type="entry name" value="Lactamase_B"/>
    <property type="match status" value="1"/>
</dbReference>
<dbReference type="SMART" id="SM00849">
    <property type="entry name" value="Lactamase_B"/>
    <property type="match status" value="1"/>
</dbReference>
<dbReference type="SUPFAM" id="SSF56281">
    <property type="entry name" value="Metallo-hydrolase/oxidoreductase"/>
    <property type="match status" value="1"/>
</dbReference>
<accession>Q8VPD5</accession>
<gene>
    <name type="primary">attM</name>
</gene>
<reference evidence="4 5" key="1">
    <citation type="journal article" date="2002" name="Proc. Natl. Acad. Sci. U.S.A.">
        <title>Genetic control of quorum-sensing signal turnover in Agrobacterium tumefaciens.</title>
        <authorList>
            <person name="Zhang H.B."/>
            <person name="Wang L.H."/>
            <person name="Zhang L.H."/>
        </authorList>
    </citation>
    <scope>NUCLEOTIDE SEQUENCE [GENOMIC DNA]</scope>
    <scope>CATALYTIC ACTIVITY</scope>
    <scope>DEVELOPMENTAL STAGE</scope>
    <source>
        <strain evidence="5">A6</strain>
    </source>
</reference>
<name>AHLLM_RHIRD</name>
<keyword id="KW-0378">Hydrolase</keyword>
<keyword id="KW-0479">Metal-binding</keyword>
<keyword id="KW-0614">Plasmid</keyword>
<keyword id="KW-0862">Zinc</keyword>